<organism>
    <name type="scientific">Botryotinia fuckeliana (strain B05.10)</name>
    <name type="common">Noble rot fungus</name>
    <name type="synonym">Botrytis cinerea</name>
    <dbReference type="NCBI Taxonomy" id="332648"/>
    <lineage>
        <taxon>Eukaryota</taxon>
        <taxon>Fungi</taxon>
        <taxon>Dikarya</taxon>
        <taxon>Ascomycota</taxon>
        <taxon>Pezizomycotina</taxon>
        <taxon>Leotiomycetes</taxon>
        <taxon>Helotiales</taxon>
        <taxon>Sclerotiniaceae</taxon>
        <taxon>Botrytis</taxon>
    </lineage>
</organism>
<protein>
    <recommendedName>
        <fullName evidence="1">Structure-specific endonuclease subunit slx4</fullName>
    </recommendedName>
</protein>
<comment type="function">
    <text evidence="1">Regulatory subunit of the slx1-slx4 structure-specific endonuclease that resolves DNA secondary structures generated during DNA repair and recombination. Has endonuclease activity towards branched DNA substrates, introducing single-strand cuts in duplex DNA close to junctions with ss-DNA.</text>
</comment>
<comment type="subunit">
    <text evidence="1">Forms a heterodimer with slx1.</text>
</comment>
<comment type="subcellular location">
    <subcellularLocation>
        <location evidence="1">Nucleus</location>
    </subcellularLocation>
</comment>
<comment type="PTM">
    <text evidence="1">Phosphorylated in response to DNA damage.</text>
</comment>
<comment type="similarity">
    <text evidence="1">Belongs to the SLX4 family.</text>
</comment>
<accession>A6SK19</accession>
<accession>A0A384JIN4</accession>
<reference key="1">
    <citation type="journal article" date="2011" name="PLoS Genet.">
        <title>Genomic analysis of the necrotrophic fungal pathogens Sclerotinia sclerotiorum and Botrytis cinerea.</title>
        <authorList>
            <person name="Amselem J."/>
            <person name="Cuomo C.A."/>
            <person name="van Kan J.A.L."/>
            <person name="Viaud M."/>
            <person name="Benito E.P."/>
            <person name="Couloux A."/>
            <person name="Coutinho P.M."/>
            <person name="de Vries R.P."/>
            <person name="Dyer P.S."/>
            <person name="Fillinger S."/>
            <person name="Fournier E."/>
            <person name="Gout L."/>
            <person name="Hahn M."/>
            <person name="Kohn L."/>
            <person name="Lapalu N."/>
            <person name="Plummer K.M."/>
            <person name="Pradier J.-M."/>
            <person name="Quevillon E."/>
            <person name="Sharon A."/>
            <person name="Simon A."/>
            <person name="ten Have A."/>
            <person name="Tudzynski B."/>
            <person name="Tudzynski P."/>
            <person name="Wincker P."/>
            <person name="Andrew M."/>
            <person name="Anthouard V."/>
            <person name="Beever R.E."/>
            <person name="Beffa R."/>
            <person name="Benoit I."/>
            <person name="Bouzid O."/>
            <person name="Brault B."/>
            <person name="Chen Z."/>
            <person name="Choquer M."/>
            <person name="Collemare J."/>
            <person name="Cotton P."/>
            <person name="Danchin E.G."/>
            <person name="Da Silva C."/>
            <person name="Gautier A."/>
            <person name="Giraud C."/>
            <person name="Giraud T."/>
            <person name="Gonzalez C."/>
            <person name="Grossetete S."/>
            <person name="Gueldener U."/>
            <person name="Henrissat B."/>
            <person name="Howlett B.J."/>
            <person name="Kodira C."/>
            <person name="Kretschmer M."/>
            <person name="Lappartient A."/>
            <person name="Leroch M."/>
            <person name="Levis C."/>
            <person name="Mauceli E."/>
            <person name="Neuveglise C."/>
            <person name="Oeser B."/>
            <person name="Pearson M."/>
            <person name="Poulain J."/>
            <person name="Poussereau N."/>
            <person name="Quesneville H."/>
            <person name="Rascle C."/>
            <person name="Schumacher J."/>
            <person name="Segurens B."/>
            <person name="Sexton A."/>
            <person name="Silva E."/>
            <person name="Sirven C."/>
            <person name="Soanes D.M."/>
            <person name="Talbot N.J."/>
            <person name="Templeton M."/>
            <person name="Yandava C."/>
            <person name="Yarden O."/>
            <person name="Zeng Q."/>
            <person name="Rollins J.A."/>
            <person name="Lebrun M.-H."/>
            <person name="Dickman M."/>
        </authorList>
    </citation>
    <scope>NUCLEOTIDE SEQUENCE [LARGE SCALE GENOMIC DNA]</scope>
    <source>
        <strain>B05.10</strain>
    </source>
</reference>
<reference key="2">
    <citation type="journal article" date="2012" name="Eukaryot. Cell">
        <title>Genome update of Botrytis cinerea strains B05.10 and T4.</title>
        <authorList>
            <person name="Staats M."/>
            <person name="van Kan J.A.L."/>
        </authorList>
    </citation>
    <scope>NUCLEOTIDE SEQUENCE [LARGE SCALE GENOMIC DNA]</scope>
    <scope>GENOME REANNOTATION</scope>
    <source>
        <strain>B05.10</strain>
    </source>
</reference>
<reference key="3">
    <citation type="journal article" date="2017" name="Mol. Plant Pathol.">
        <title>A gapless genome sequence of the fungus Botrytis cinerea.</title>
        <authorList>
            <person name="van Kan J.A.L."/>
            <person name="Stassen J.H.M."/>
            <person name="Mosbach A."/>
            <person name="van der Lee T.A.J."/>
            <person name="Faino L."/>
            <person name="Farmer A.D."/>
            <person name="Papasotiriou D.G."/>
            <person name="Zhou S."/>
            <person name="Seidl M.F."/>
            <person name="Cottam E."/>
            <person name="Edel D."/>
            <person name="Hahn M."/>
            <person name="Schwartz D.C."/>
            <person name="Dietrich R.A."/>
            <person name="Widdison S."/>
            <person name="Scalliet G."/>
        </authorList>
    </citation>
    <scope>NUCLEOTIDE SEQUENCE [LARGE SCALE GENOMIC DNA]</scope>
    <scope>GENOME REANNOTATION</scope>
    <source>
        <strain>B05.10</strain>
    </source>
</reference>
<gene>
    <name type="primary">slx4</name>
    <name type="ORF">BC1G_13159</name>
    <name type="ORF">BCIN_05g08080</name>
</gene>
<evidence type="ECO:0000255" key="1">
    <source>
        <dbReference type="HAMAP-Rule" id="MF_03110"/>
    </source>
</evidence>
<evidence type="ECO:0000256" key="2">
    <source>
        <dbReference type="SAM" id="MobiDB-lite"/>
    </source>
</evidence>
<sequence>MTMATTDVFIISSSPPRQSVSYNVSSPPLPSLDEMIKQKKAPNLRRGGGAASTPLDPTATFTSASALLRRGSSGSLQEFDTARSLATTTKPDENEQKKTAKPKAPRKPAAKKEDGPIEKVAKVPRKTTRNKGEDRAEGFIEGVVEEGKEGVKTIPEKKPRKSRAKKTDNLGGDGEDGGITGAVVPDVSKVAVETKACKPRAKKGDDITGEGVKERAPRKPRAKKTDVEAGSESVAKEKAVRKPRAKKSDGGTTVQPKMAKGRVTKTTNASNPDKVETPKADKVSKHFASNPVVEDLLAEEGSGLSEAVKRRKNWTPPKSNQVLIDYDDSPEAGSSGCNQGFTELLGSFGFSSSEANSIEKRISSGVSSGAAVTRKRKLIEMVHTNIPTTAGTKATKEKAVKKKARTLTDLATSAYTATEDDDTINDTPAPLLQHFPKAASGELTNDGFKKPPKLRSKSPVKGLPKSKKGSAEEPILLSPESALKQVGNQDFVFGTSSQLAREDSPSLLRDLHDAMQASNELDDYDDPFISPPTKIAERAKAVIAAKRNLWSIAARDDHGDLIDIETVDLAHTPVAKPDRIILSQKPSSLWITPAKDEWYDIDEIEENRPPSTQVPVRQMGPIEMAINLELSNSPLQPKNSSKDVSTSSPRKKHTKASIIETTPKKTTTAKMPDYESFTTPQLSREIQKYKFKQIKSRKKMIDLLVQCFESQNRPALGVLQGNIPITSQGSSEVSKVIAGSSTQLEPTISSSQRGRGRPTKDTAASKSKAKSKIKDSVAILETDSNAPLSEFRTPKKSKKGKQVIEDVPDSDHPMTPSPPRRSASQIRKASKALELSPIKNDHDDEAQQAQLFTHIYTAITSAPPSQDLSNPSWHEKILLYDPVVLEDLASWLNTGALGKVGWDGEVAPKELKKWCESKSICCLWKENQGGGARSRY</sequence>
<feature type="chain" id="PRO_0000388019" description="Structure-specific endonuclease subunit slx4">
    <location>
        <begin position="1"/>
        <end position="936"/>
    </location>
</feature>
<feature type="region of interest" description="Disordered" evidence="2">
    <location>
        <begin position="1"/>
        <end position="182"/>
    </location>
</feature>
<feature type="region of interest" description="Disordered" evidence="2">
    <location>
        <begin position="195"/>
        <end position="291"/>
    </location>
</feature>
<feature type="region of interest" description="Disordered" evidence="2">
    <location>
        <begin position="303"/>
        <end position="338"/>
    </location>
</feature>
<feature type="region of interest" description="Disordered" evidence="2">
    <location>
        <begin position="437"/>
        <end position="472"/>
    </location>
</feature>
<feature type="region of interest" description="Disordered" evidence="2">
    <location>
        <begin position="631"/>
        <end position="671"/>
    </location>
</feature>
<feature type="region of interest" description="Disordered" evidence="2">
    <location>
        <begin position="734"/>
        <end position="829"/>
    </location>
</feature>
<feature type="compositionally biased region" description="Polar residues" evidence="2">
    <location>
        <begin position="11"/>
        <end position="26"/>
    </location>
</feature>
<feature type="compositionally biased region" description="Low complexity" evidence="2">
    <location>
        <begin position="63"/>
        <end position="76"/>
    </location>
</feature>
<feature type="compositionally biased region" description="Basic residues" evidence="2">
    <location>
        <begin position="99"/>
        <end position="109"/>
    </location>
</feature>
<feature type="compositionally biased region" description="Basic and acidic residues" evidence="2">
    <location>
        <begin position="110"/>
        <end position="121"/>
    </location>
</feature>
<feature type="compositionally biased region" description="Basic and acidic residues" evidence="2">
    <location>
        <begin position="145"/>
        <end position="157"/>
    </location>
</feature>
<feature type="compositionally biased region" description="Basic and acidic residues" evidence="2">
    <location>
        <begin position="202"/>
        <end position="227"/>
    </location>
</feature>
<feature type="compositionally biased region" description="Basic and acidic residues" evidence="2">
    <location>
        <begin position="273"/>
        <end position="284"/>
    </location>
</feature>
<feature type="compositionally biased region" description="Basic residues" evidence="2">
    <location>
        <begin position="450"/>
        <end position="468"/>
    </location>
</feature>
<feature type="compositionally biased region" description="Polar residues" evidence="2">
    <location>
        <begin position="631"/>
        <end position="648"/>
    </location>
</feature>
<feature type="compositionally biased region" description="Polar residues" evidence="2">
    <location>
        <begin position="734"/>
        <end position="753"/>
    </location>
</feature>
<dbReference type="EMBL" id="CP009809">
    <property type="protein sequence ID" value="ATZ50458.1"/>
    <property type="molecule type" value="Genomic_DNA"/>
</dbReference>
<dbReference type="SMR" id="A6SK19"/>
<dbReference type="EnsemblFungi" id="Bcin05g08080.1">
    <property type="protein sequence ID" value="Bcin05p08080.1"/>
    <property type="gene ID" value="Bcin05g08080"/>
</dbReference>
<dbReference type="VEuPathDB" id="FungiDB:Bcin05g08080"/>
<dbReference type="OrthoDB" id="5349119at2759"/>
<dbReference type="Proteomes" id="UP000001798">
    <property type="component" value="Chromosome bcin05"/>
</dbReference>
<dbReference type="GO" id="GO:0033557">
    <property type="term" value="C:Slx1-Slx4 complex"/>
    <property type="evidence" value="ECO:0007669"/>
    <property type="project" value="UniProtKB-UniRule"/>
</dbReference>
<dbReference type="GO" id="GO:0017108">
    <property type="term" value="F:5'-flap endonuclease activity"/>
    <property type="evidence" value="ECO:0007669"/>
    <property type="project" value="InterPro"/>
</dbReference>
<dbReference type="GO" id="GO:0006310">
    <property type="term" value="P:DNA recombination"/>
    <property type="evidence" value="ECO:0007669"/>
    <property type="project" value="UniProtKB-UniRule"/>
</dbReference>
<dbReference type="GO" id="GO:0006281">
    <property type="term" value="P:DNA repair"/>
    <property type="evidence" value="ECO:0007669"/>
    <property type="project" value="UniProtKB-UniRule"/>
</dbReference>
<dbReference type="GO" id="GO:0006260">
    <property type="term" value="P:DNA replication"/>
    <property type="evidence" value="ECO:0007669"/>
    <property type="project" value="InterPro"/>
</dbReference>
<dbReference type="CDD" id="cd22999">
    <property type="entry name" value="SAP_SLX4"/>
    <property type="match status" value="1"/>
</dbReference>
<dbReference type="HAMAP" id="MF_03110">
    <property type="entry name" value="Endonuc_su_Slx4"/>
    <property type="match status" value="1"/>
</dbReference>
<dbReference type="InterPro" id="IPR027784">
    <property type="entry name" value="Slx4_ascomycetes"/>
</dbReference>
<dbReference type="InterPro" id="IPR018574">
    <property type="entry name" value="Structure-sp_endonuc_su_Slx4"/>
</dbReference>
<dbReference type="Pfam" id="PF09494">
    <property type="entry name" value="Slx4"/>
    <property type="match status" value="1"/>
</dbReference>
<keyword id="KW-0227">DNA damage</keyword>
<keyword id="KW-0233">DNA recombination</keyword>
<keyword id="KW-0234">DNA repair</keyword>
<keyword id="KW-0539">Nucleus</keyword>
<keyword id="KW-0597">Phosphoprotein</keyword>
<keyword id="KW-1185">Reference proteome</keyword>
<proteinExistence type="inferred from homology"/>
<name>SLX4_BOTFB</name>